<comment type="function">
    <text evidence="1">Transforms avian and murine macrophages and fibroblasts as well as murine B-lymphoid cells.</text>
</comment>
<comment type="subunit">
    <text>Efficient DNA binding requires dimerization with another bHLH protein.</text>
</comment>
<comment type="subcellular location">
    <subcellularLocation>
        <location evidence="1">Host nucleus</location>
    </subcellularLocation>
</comment>
<comment type="miscellaneous">
    <text>This protein is synthesized as a Gag-vMht-vMyc chimeric protein. The sequence shown here corresponds to the Myc homolog fragment of the chimera.</text>
</comment>
<comment type="sequence caution" evidence="4">
    <conflict type="erroneous initiation">
        <sequence resource="EMBL-CDS" id="AAB59930"/>
    </conflict>
</comment>
<organism>
    <name type="scientific">Avian retrovirus MH2</name>
    <dbReference type="NCBI Taxonomy" id="11870"/>
    <lineage>
        <taxon>Viruses</taxon>
        <taxon>Riboviria</taxon>
        <taxon>Pararnavirae</taxon>
        <taxon>Artverviricota</taxon>
        <taxon>Revtraviricetes</taxon>
        <taxon>Ortervirales</taxon>
        <taxon>Retroviridae</taxon>
        <taxon>Orthoretrovirinae</taxon>
        <taxon>Alpharetrovirus</taxon>
    </lineage>
</organism>
<proteinExistence type="inferred from homology"/>
<sequence>MPLSVSLPSKNYDYDYDSVQPYFYFEEEEENFYSAAQQRSSELQPPAPSEDIWKKFELLPAPPLSPSCRSNLAAASCFPSTADQLEMVTELLGGDMVNQSSICDPDDESFVKSIIIRDCMWSGFSAAAKLEKVVSEKLATYKASRREGGPAAASRPGPPPSGPPPPPAGPAASAGLYLHDLGAAAAGCIGSSVVFPCPLGRRGPPGAGPAALLGVDAPPTVGGGSEEEQEEDEEIDVVTLAEANESESSTESGTEASEEHCKPHHSPLVLERCHVNIHQHNYAAPPSTKVEYPAAKRLKLDSGRVLKQVSNNRKCSSPRTSDSEVNDKRRTHNVLERQRRNELKLSFFALRDQIPEVANNEKAPKVVILKRATEYVLSIQSDEHRLIAEKEQLRRRREQLKHKLEQLRNSRA</sequence>
<name>MYC_AVIMH</name>
<gene>
    <name type="primary">MYC</name>
</gene>
<organismHost>
    <name type="scientific">Galliformes</name>
    <dbReference type="NCBI Taxonomy" id="8976"/>
</organismHost>
<dbReference type="EMBL" id="K02082">
    <property type="protein sequence ID" value="AAB59930.1"/>
    <property type="status" value="ALT_INIT"/>
    <property type="molecule type" value="Genomic_DNA"/>
</dbReference>
<dbReference type="PIR" id="A29285">
    <property type="entry name" value="TVFV2E"/>
</dbReference>
<dbReference type="SMR" id="P0C0N9"/>
<dbReference type="GO" id="GO:0042025">
    <property type="term" value="C:host cell nucleus"/>
    <property type="evidence" value="ECO:0007669"/>
    <property type="project" value="UniProtKB-SubCell"/>
</dbReference>
<dbReference type="GO" id="GO:0003677">
    <property type="term" value="F:DNA binding"/>
    <property type="evidence" value="ECO:0007669"/>
    <property type="project" value="UniProtKB-KW"/>
</dbReference>
<dbReference type="GO" id="GO:0003700">
    <property type="term" value="F:DNA-binding transcription factor activity"/>
    <property type="evidence" value="ECO:0007669"/>
    <property type="project" value="InterPro"/>
</dbReference>
<dbReference type="GO" id="GO:0046983">
    <property type="term" value="F:protein dimerization activity"/>
    <property type="evidence" value="ECO:0007669"/>
    <property type="project" value="InterPro"/>
</dbReference>
<dbReference type="CDD" id="cd11458">
    <property type="entry name" value="bHLHzip_c-Myc"/>
    <property type="match status" value="1"/>
</dbReference>
<dbReference type="FunFam" id="4.10.280.10:FF:000019">
    <property type="entry name" value="Myc proto-oncogene protein"/>
    <property type="match status" value="1"/>
</dbReference>
<dbReference type="Gene3D" id="4.10.280.10">
    <property type="entry name" value="Helix-loop-helix DNA-binding domain"/>
    <property type="match status" value="1"/>
</dbReference>
<dbReference type="InterPro" id="IPR011598">
    <property type="entry name" value="bHLH_dom"/>
</dbReference>
<dbReference type="InterPro" id="IPR036638">
    <property type="entry name" value="HLH_DNA-bd_sf"/>
</dbReference>
<dbReference type="InterPro" id="IPR003327">
    <property type="entry name" value="Myc-LZ"/>
</dbReference>
<dbReference type="InterPro" id="IPR050433">
    <property type="entry name" value="Myc_transcription_factors"/>
</dbReference>
<dbReference type="InterPro" id="IPR002418">
    <property type="entry name" value="Tscrpt_reg_Myc"/>
</dbReference>
<dbReference type="InterPro" id="IPR012682">
    <property type="entry name" value="Tscrpt_reg_Myc_N"/>
</dbReference>
<dbReference type="PANTHER" id="PTHR45851">
    <property type="entry name" value="MYC PROTO-ONCOGENE"/>
    <property type="match status" value="1"/>
</dbReference>
<dbReference type="Pfam" id="PF00010">
    <property type="entry name" value="HLH"/>
    <property type="match status" value="1"/>
</dbReference>
<dbReference type="Pfam" id="PF02344">
    <property type="entry name" value="Myc-LZ"/>
    <property type="match status" value="1"/>
</dbReference>
<dbReference type="Pfam" id="PF01056">
    <property type="entry name" value="Myc_N"/>
    <property type="match status" value="2"/>
</dbReference>
<dbReference type="PIRSF" id="PIRSF001705">
    <property type="entry name" value="Myc_protein"/>
    <property type="match status" value="1"/>
</dbReference>
<dbReference type="PRINTS" id="PR00044">
    <property type="entry name" value="LEUZIPPRMYC"/>
</dbReference>
<dbReference type="SMART" id="SM00353">
    <property type="entry name" value="HLH"/>
    <property type="match status" value="1"/>
</dbReference>
<dbReference type="SUPFAM" id="SSF47459">
    <property type="entry name" value="HLH, helix-loop-helix DNA-binding domain"/>
    <property type="match status" value="1"/>
</dbReference>
<dbReference type="PROSITE" id="PS50888">
    <property type="entry name" value="BHLH"/>
    <property type="match status" value="1"/>
</dbReference>
<keyword id="KW-0238">DNA-binding</keyword>
<keyword id="KW-1048">Host nucleus</keyword>
<keyword id="KW-0553">Oncogene</keyword>
<evidence type="ECO:0000250" key="1"/>
<evidence type="ECO:0000255" key="2">
    <source>
        <dbReference type="PROSITE-ProRule" id="PRU00981"/>
    </source>
</evidence>
<evidence type="ECO:0000256" key="3">
    <source>
        <dbReference type="SAM" id="MobiDB-lite"/>
    </source>
</evidence>
<evidence type="ECO:0000305" key="4"/>
<feature type="chain" id="PRO_0000127306" description="Viral myc transforming protein">
    <location>
        <begin position="1"/>
        <end position="412"/>
    </location>
</feature>
<feature type="domain" description="bHLH" evidence="2">
    <location>
        <begin position="327"/>
        <end position="379"/>
    </location>
</feature>
<feature type="region of interest" description="Disordered" evidence="3">
    <location>
        <begin position="144"/>
        <end position="173"/>
    </location>
</feature>
<feature type="region of interest" description="Disordered" evidence="3">
    <location>
        <begin position="208"/>
        <end position="264"/>
    </location>
</feature>
<feature type="region of interest" description="Disordered" evidence="3">
    <location>
        <begin position="309"/>
        <end position="328"/>
    </location>
</feature>
<feature type="region of interest" description="Leucine-zipper">
    <location>
        <begin position="386"/>
        <end position="407"/>
    </location>
</feature>
<feature type="compositionally biased region" description="Pro residues" evidence="3">
    <location>
        <begin position="156"/>
        <end position="169"/>
    </location>
</feature>
<feature type="compositionally biased region" description="Acidic residues" evidence="3">
    <location>
        <begin position="225"/>
        <end position="236"/>
    </location>
</feature>
<feature type="compositionally biased region" description="Low complexity" evidence="3">
    <location>
        <begin position="239"/>
        <end position="255"/>
    </location>
</feature>
<feature type="compositionally biased region" description="Polar residues" evidence="3">
    <location>
        <begin position="309"/>
        <end position="320"/>
    </location>
</feature>
<protein>
    <recommendedName>
        <fullName>Viral myc transforming protein</fullName>
        <shortName>v-Myc</shortName>
    </recommendedName>
</protein>
<reference key="1">
    <citation type="journal article" date="1984" name="Proc. Natl. Acad. Sci. U.S.A.">
        <title>Nucleotide sequence of avian carcinoma virus MH2: two potential onc genes, one related to avian virus MC29 and the other related to murine sarcoma virus 3611.</title>
        <authorList>
            <person name="Kan N.C."/>
            <person name="Flordellis C.S."/>
            <person name="Mark G.E."/>
            <person name="Duesberg P.H."/>
            <person name="Papas T.S."/>
        </authorList>
    </citation>
    <scope>NUCLEOTIDE SEQUENCE [GENOMIC DNA]</scope>
</reference>
<accession>P0C0N9</accession>
<accession>P06647</accession>